<protein>
    <recommendedName>
        <fullName>Universal stress protein A</fullName>
    </recommendedName>
</protein>
<accession>P0AED0</accession>
<accession>P28242</accession>
<accession>Q2M7F7</accession>
<keyword id="KW-0963">Cytoplasm</keyword>
<keyword id="KW-0903">Direct protein sequencing</keyword>
<keyword id="KW-0597">Phosphoprotein</keyword>
<keyword id="KW-1185">Reference proteome</keyword>
<comment type="function">
    <text>Required for resistance to DNA-damaging agents.</text>
</comment>
<comment type="subunit">
    <text evidence="1">Homodimer.</text>
</comment>
<comment type="interaction">
    <interactant intactId="EBI-552843">
        <id>P0AED0</id>
    </interactant>
    <interactant intactId="EBI-552843">
        <id>P0AED0</id>
        <label>uspA</label>
    </interactant>
    <organismsDiffer>false</organismsDiffer>
    <experiments>2</experiments>
</comment>
<comment type="subcellular location">
    <subcellularLocation>
        <location>Cytoplasm</location>
    </subcellularLocation>
</comment>
<comment type="induction">
    <text>During growth inhibition caused by the exhaustion of any of a variety of nutrients (carbon, nitrogen, phosphate, sulfate, required amino acid) or by the presence of a variety of toxic agents. Positively regulated by guanosine 3',5'-bisphosphate (ppGpp) and by a RecA/FtsK-dependent regulatory pathway. Negatively regulated by FadR. Also regulated by CspC and CspE.</text>
</comment>
<comment type="PTM">
    <text evidence="5">Phosphorylated on serine or threonine in response to stasis.</text>
</comment>
<comment type="similarity">
    <text evidence="7">Belongs to the universal stress protein A family.</text>
</comment>
<dbReference type="EMBL" id="X67639">
    <property type="protein sequence ID" value="CAA47884.1"/>
    <property type="molecule type" value="Genomic_DNA"/>
</dbReference>
<dbReference type="EMBL" id="U00039">
    <property type="protein sequence ID" value="AAB18471.1"/>
    <property type="molecule type" value="Genomic_DNA"/>
</dbReference>
<dbReference type="EMBL" id="U00096">
    <property type="protein sequence ID" value="AAC76520.1"/>
    <property type="molecule type" value="Genomic_DNA"/>
</dbReference>
<dbReference type="EMBL" id="AP009048">
    <property type="protein sequence ID" value="BAE77799.1"/>
    <property type="molecule type" value="Genomic_DNA"/>
</dbReference>
<dbReference type="PIR" id="S47715">
    <property type="entry name" value="S47715"/>
</dbReference>
<dbReference type="RefSeq" id="NP_417952.1">
    <property type="nucleotide sequence ID" value="NC_000913.3"/>
</dbReference>
<dbReference type="RefSeq" id="WP_000323571.1">
    <property type="nucleotide sequence ID" value="NZ_STEB01000046.1"/>
</dbReference>
<dbReference type="SMR" id="P0AED0"/>
<dbReference type="BioGRID" id="4262517">
    <property type="interactions" value="10"/>
</dbReference>
<dbReference type="BioGRID" id="852315">
    <property type="interactions" value="4"/>
</dbReference>
<dbReference type="DIP" id="DIP-36230N"/>
<dbReference type="FunCoup" id="P0AED0">
    <property type="interactions" value="109"/>
</dbReference>
<dbReference type="IntAct" id="P0AED0">
    <property type="interactions" value="9"/>
</dbReference>
<dbReference type="STRING" id="511145.b3495"/>
<dbReference type="jPOST" id="P0AED0"/>
<dbReference type="PaxDb" id="511145-b3495"/>
<dbReference type="EnsemblBacteria" id="AAC76520">
    <property type="protein sequence ID" value="AAC76520"/>
    <property type="gene ID" value="b3495"/>
</dbReference>
<dbReference type="GeneID" id="93778498"/>
<dbReference type="GeneID" id="948007"/>
<dbReference type="KEGG" id="ecj:JW3462"/>
<dbReference type="KEGG" id="eco:b3495"/>
<dbReference type="KEGG" id="ecoc:C3026_18930"/>
<dbReference type="PATRIC" id="fig|511145.12.peg.3597"/>
<dbReference type="EchoBASE" id="EB1363"/>
<dbReference type="eggNOG" id="COG0589">
    <property type="taxonomic scope" value="Bacteria"/>
</dbReference>
<dbReference type="HOGENOM" id="CLU_049301_18_0_6"/>
<dbReference type="InParanoid" id="P0AED0"/>
<dbReference type="OMA" id="MNTVPCD"/>
<dbReference type="OrthoDB" id="9792500at2"/>
<dbReference type="PhylomeDB" id="P0AED0"/>
<dbReference type="BioCyc" id="EcoCyc:EG11390-MONOMER"/>
<dbReference type="PRO" id="PR:P0AED0"/>
<dbReference type="Proteomes" id="UP000000625">
    <property type="component" value="Chromosome"/>
</dbReference>
<dbReference type="GO" id="GO:0005737">
    <property type="term" value="C:cytoplasm"/>
    <property type="evidence" value="ECO:0007669"/>
    <property type="project" value="UniProtKB-SubCell"/>
</dbReference>
<dbReference type="GO" id="GO:0016020">
    <property type="term" value="C:membrane"/>
    <property type="evidence" value="ECO:0007005"/>
    <property type="project" value="UniProtKB"/>
</dbReference>
<dbReference type="GO" id="GO:0042802">
    <property type="term" value="F:identical protein binding"/>
    <property type="evidence" value="ECO:0000353"/>
    <property type="project" value="IntAct"/>
</dbReference>
<dbReference type="GO" id="GO:0042803">
    <property type="term" value="F:protein homodimerization activity"/>
    <property type="evidence" value="ECO:0000314"/>
    <property type="project" value="EcoCyc"/>
</dbReference>
<dbReference type="GO" id="GO:0006950">
    <property type="term" value="P:response to stress"/>
    <property type="evidence" value="ECO:0000318"/>
    <property type="project" value="GO_Central"/>
</dbReference>
<dbReference type="CDD" id="cd23657">
    <property type="entry name" value="USP-A-like"/>
    <property type="match status" value="1"/>
</dbReference>
<dbReference type="FunFam" id="3.40.50.620:FF:000014">
    <property type="entry name" value="Universal stress protein"/>
    <property type="match status" value="1"/>
</dbReference>
<dbReference type="Gene3D" id="3.40.50.620">
    <property type="entry name" value="HUPs"/>
    <property type="match status" value="1"/>
</dbReference>
<dbReference type="InterPro" id="IPR014729">
    <property type="entry name" value="Rossmann-like_a/b/a_fold"/>
</dbReference>
<dbReference type="InterPro" id="IPR006015">
    <property type="entry name" value="Universal_stress_UspA"/>
</dbReference>
<dbReference type="InterPro" id="IPR006016">
    <property type="entry name" value="UspA"/>
</dbReference>
<dbReference type="NCBIfam" id="NF011698">
    <property type="entry name" value="PRK15118.1"/>
    <property type="match status" value="1"/>
</dbReference>
<dbReference type="PANTHER" id="PTHR46268">
    <property type="entry name" value="STRESS RESPONSE PROTEIN NHAX"/>
    <property type="match status" value="1"/>
</dbReference>
<dbReference type="PANTHER" id="PTHR46268:SF23">
    <property type="entry name" value="UNIVERSAL STRESS PROTEIN A-RELATED"/>
    <property type="match status" value="1"/>
</dbReference>
<dbReference type="Pfam" id="PF00582">
    <property type="entry name" value="Usp"/>
    <property type="match status" value="1"/>
</dbReference>
<dbReference type="PIRSF" id="PIRSF006276">
    <property type="entry name" value="UspA"/>
    <property type="match status" value="1"/>
</dbReference>
<dbReference type="SUPFAM" id="SSF52402">
    <property type="entry name" value="Adenine nucleotide alpha hydrolases-like"/>
    <property type="match status" value="1"/>
</dbReference>
<name>USPA_ECOLI</name>
<sequence>MAYKHILIAVDLSPESKVLVEKAVSMARPYNAKVSLIHVDVNYSDLYTGLIDVNLGDMQKRISEETHHALTELSTNAGYPITETLSGSGDLGQVLVDAIKKYDMDLVVCGHHQDFWSKLMSSARQLINTVHVDMLIVPLRDEEE</sequence>
<gene>
    <name type="primary">uspA</name>
    <name type="ordered locus">b3495</name>
    <name type="ordered locus">JW3462</name>
</gene>
<feature type="initiator methionine" description="Removed" evidence="2 3 4 6">
    <location>
        <position position="1"/>
    </location>
</feature>
<feature type="chain" id="PRO_0000147396" description="Universal stress protein A">
    <location>
        <begin position="2"/>
        <end position="144"/>
    </location>
</feature>
<feature type="sequence conflict" description="In Ref. 1; CAA47884." evidence="7" ref="1">
    <original>R</original>
    <variation>A</variation>
    <location>
        <position position="140"/>
    </location>
</feature>
<organism>
    <name type="scientific">Escherichia coli (strain K12)</name>
    <dbReference type="NCBI Taxonomy" id="83333"/>
    <lineage>
        <taxon>Bacteria</taxon>
        <taxon>Pseudomonadati</taxon>
        <taxon>Pseudomonadota</taxon>
        <taxon>Gammaproteobacteria</taxon>
        <taxon>Enterobacterales</taxon>
        <taxon>Enterobacteriaceae</taxon>
        <taxon>Escherichia</taxon>
    </lineage>
</organism>
<evidence type="ECO:0000250" key="1"/>
<evidence type="ECO:0000269" key="2">
    <source>
    </source>
</evidence>
<evidence type="ECO:0000269" key="3">
    <source>
    </source>
</evidence>
<evidence type="ECO:0000269" key="4">
    <source>
    </source>
</evidence>
<evidence type="ECO:0000269" key="5">
    <source>
    </source>
</evidence>
<evidence type="ECO:0000269" key="6">
    <source ref="6"/>
</evidence>
<evidence type="ECO:0000305" key="7"/>
<proteinExistence type="evidence at protein level"/>
<reference key="1">
    <citation type="journal article" date="1992" name="Mol. Microbiol.">
        <title>Cloning, mapping and nucleotide sequencing of a gene encoding a universal stress protein in Escherichia coli.</title>
        <authorList>
            <person name="Nystroem T."/>
            <person name="Neidhardt F.C."/>
        </authorList>
    </citation>
    <scope>NUCLEOTIDE SEQUENCE [GENOMIC DNA]</scope>
    <scope>PROTEIN SEQUENCE OF 2-15</scope>
    <source>
        <strain>K12</strain>
    </source>
</reference>
<reference key="2">
    <citation type="journal article" date="1994" name="Nucleic Acids Res.">
        <title>Analysis of the Escherichia coli genome. V. DNA sequence of the region from 76.0 to 81.5 minutes.</title>
        <authorList>
            <person name="Sofia H.J."/>
            <person name="Burland V."/>
            <person name="Daniels D.L."/>
            <person name="Plunkett G. III"/>
            <person name="Blattner F.R."/>
        </authorList>
    </citation>
    <scope>NUCLEOTIDE SEQUENCE [LARGE SCALE GENOMIC DNA]</scope>
    <source>
        <strain>K12 / MG1655 / ATCC 47076</strain>
    </source>
</reference>
<reference key="3">
    <citation type="journal article" date="1997" name="Science">
        <title>The complete genome sequence of Escherichia coli K-12.</title>
        <authorList>
            <person name="Blattner F.R."/>
            <person name="Plunkett G. III"/>
            <person name="Bloch C.A."/>
            <person name="Perna N.T."/>
            <person name="Burland V."/>
            <person name="Riley M."/>
            <person name="Collado-Vides J."/>
            <person name="Glasner J.D."/>
            <person name="Rode C.K."/>
            <person name="Mayhew G.F."/>
            <person name="Gregor J."/>
            <person name="Davis N.W."/>
            <person name="Kirkpatrick H.A."/>
            <person name="Goeden M.A."/>
            <person name="Rose D.J."/>
            <person name="Mau B."/>
            <person name="Shao Y."/>
        </authorList>
    </citation>
    <scope>NUCLEOTIDE SEQUENCE [LARGE SCALE GENOMIC DNA]</scope>
    <source>
        <strain>K12 / MG1655 / ATCC 47076</strain>
    </source>
</reference>
<reference key="4">
    <citation type="journal article" date="2006" name="Mol. Syst. Biol.">
        <title>Highly accurate genome sequences of Escherichia coli K-12 strains MG1655 and W3110.</title>
        <authorList>
            <person name="Hayashi K."/>
            <person name="Morooka N."/>
            <person name="Yamamoto Y."/>
            <person name="Fujita K."/>
            <person name="Isono K."/>
            <person name="Choi S."/>
            <person name="Ohtsubo E."/>
            <person name="Baba T."/>
            <person name="Wanner B.L."/>
            <person name="Mori H."/>
            <person name="Horiuchi T."/>
        </authorList>
    </citation>
    <scope>NUCLEOTIDE SEQUENCE [LARGE SCALE GENOMIC DNA]</scope>
    <source>
        <strain>K12 / W3110 / ATCC 27325 / DSM 5911</strain>
    </source>
</reference>
<reference key="5">
    <citation type="journal article" date="1993" name="Proc. Natl. Acad. Sci. U.S.A.">
        <title>Identifying proteins from two-dimensional gels by molecular mass searching of peptide fragments in protein sequence databases.</title>
        <authorList>
            <person name="Henzel W.J."/>
            <person name="Billeci T.M."/>
            <person name="Stults J.T."/>
            <person name="Wong S.C."/>
            <person name="Grimley C."/>
            <person name="Watanabe C."/>
        </authorList>
    </citation>
    <scope>PROTEIN SEQUENCE OF 2-19</scope>
</reference>
<reference key="6">
    <citation type="submission" date="1994-09" db="UniProtKB">
        <authorList>
            <person name="Pasquali C."/>
            <person name="Sanchez J.-C."/>
            <person name="Ravier F."/>
            <person name="Golaz O."/>
            <person name="Hughes G.J."/>
            <person name="Frutiger S."/>
            <person name="Paquet N."/>
            <person name="Wilkins M."/>
            <person name="Appel R.D."/>
            <person name="Bairoch A."/>
            <person name="Hochstrasser D.F."/>
        </authorList>
    </citation>
    <scope>PROTEIN SEQUENCE OF 2-13</scope>
    <source>
        <strain>K12 / W3110 / ATCC 27325 / DSM 5911</strain>
    </source>
</reference>
<reference key="7">
    <citation type="journal article" date="1997" name="Electrophoresis">
        <title>Comparing the predicted and observed properties of proteins encoded in the genome of Escherichia coli K-12.</title>
        <authorList>
            <person name="Link A.J."/>
            <person name="Robison K."/>
            <person name="Church G.M."/>
        </authorList>
    </citation>
    <scope>PROTEIN SEQUENCE OF 2-13</scope>
    <source>
        <strain>K12 / EMG2</strain>
    </source>
</reference>
<reference key="8">
    <citation type="journal article" date="1997" name="Electrophoresis">
        <title>Escherichia coli proteome analysis using the gene-protein database.</title>
        <authorList>
            <person name="VanBogelen R.A."/>
            <person name="Abshire K.Z."/>
            <person name="Moldover B."/>
            <person name="Olson E.R."/>
            <person name="Neidhardt F.C."/>
        </authorList>
    </citation>
    <scope>IDENTIFICATION BY 2D-GEL</scope>
</reference>
<reference key="9">
    <citation type="journal article" date="1997" name="J. Mol. Biol.">
        <title>The universal stress protein, UspA, of Escherichia coli is phosphorylated in response to stasis.</title>
        <authorList>
            <person name="Freestone P."/>
            <person name="Nystroem T."/>
            <person name="Trinei M."/>
            <person name="Norris V."/>
        </authorList>
    </citation>
    <scope>PHOSPHORYLATION</scope>
</reference>
<reference key="10">
    <citation type="journal article" date="1996" name="J. Bacteriol.">
        <title>Role of the Escherichia coli FadR regulator in stasis survival and growth phase-dependent expression of the uspA, fad, and fab genes.</title>
        <authorList>
            <person name="Farewell A."/>
            <person name="Diez A.A."/>
            <person name="DiRusso C.C."/>
            <person name="Nystroem T."/>
        </authorList>
    </citation>
    <scope>REGULATION BY FADR</scope>
    <source>
        <strain>K12 / MC4100 / ATCC 35695 / DSM 6574</strain>
    </source>
</reference>
<reference key="11">
    <citation type="journal article" date="2000" name="Mol. Microbiol.">
        <title>Emergency derepression: stringency allows RNA polymerase to override negative control by an active repressor.</title>
        <authorList>
            <person name="Kvint K."/>
            <person name="Hosbond C."/>
            <person name="Farewell A."/>
            <person name="Nybroe O."/>
            <person name="Nystroem T."/>
        </authorList>
    </citation>
    <scope>REGULATION BY PPGPP AND FADR</scope>
    <source>
        <strain>K12 / MC4100 / ATCC 35695 / DSM 6574</strain>
    </source>
</reference>
<reference key="12">
    <citation type="journal article" date="2000" name="Mol. Microbiol.">
        <title>The universal stress protein A of Escherichia coli is required for resistance to DNA damaging agents and is regulated by a RecA/FtsK-dependent regulatory pathway.</title>
        <authorList>
            <person name="Diez A."/>
            <person name="Gustavsson N."/>
            <person name="Nystroem T."/>
        </authorList>
    </citation>
    <scope>REGULATION BY RECA/FTSK</scope>
    <source>
        <strain>K12 / MC4100 / ATCC 35695 / DSM 6574</strain>
    </source>
</reference>
<reference key="13">
    <citation type="journal article" date="2001" name="J. Bacteriol.">
        <title>Role of CspC and CspE in regulation of expression of RpoS and UspA, the stress response proteins in Escherichia coli.</title>
        <authorList>
            <person name="Phadtare S."/>
            <person name="Inouye M."/>
        </authorList>
    </citation>
    <scope>REGULATION BY CSPC AND CSPE</scope>
    <source>
        <strain>K12 / ATCC 35607 / JM83</strain>
    </source>
</reference>